<dbReference type="EMBL" id="CP000857">
    <property type="protein sequence ID" value="ACN44613.1"/>
    <property type="molecule type" value="Genomic_DNA"/>
</dbReference>
<dbReference type="RefSeq" id="WP_000801129.1">
    <property type="nucleotide sequence ID" value="NC_012125.1"/>
</dbReference>
<dbReference type="SMR" id="C0Q7U3"/>
<dbReference type="GeneID" id="89550189"/>
<dbReference type="KEGG" id="sei:SPC_0430"/>
<dbReference type="HOGENOM" id="CLU_087843_4_1_6"/>
<dbReference type="Proteomes" id="UP000001599">
    <property type="component" value="Chromosome"/>
</dbReference>
<dbReference type="GO" id="GO:0005829">
    <property type="term" value="C:cytosol"/>
    <property type="evidence" value="ECO:0007669"/>
    <property type="project" value="TreeGrafter"/>
</dbReference>
<dbReference type="GO" id="GO:0003723">
    <property type="term" value="F:RNA binding"/>
    <property type="evidence" value="ECO:0007669"/>
    <property type="project" value="UniProtKB-UniRule"/>
</dbReference>
<dbReference type="GO" id="GO:0006353">
    <property type="term" value="P:DNA-templated transcription termination"/>
    <property type="evidence" value="ECO:0007669"/>
    <property type="project" value="UniProtKB-UniRule"/>
</dbReference>
<dbReference type="GO" id="GO:0031564">
    <property type="term" value="P:transcription antitermination"/>
    <property type="evidence" value="ECO:0007669"/>
    <property type="project" value="UniProtKB-KW"/>
</dbReference>
<dbReference type="CDD" id="cd00619">
    <property type="entry name" value="Terminator_NusB"/>
    <property type="match status" value="1"/>
</dbReference>
<dbReference type="FunFam" id="1.10.940.10:FF:000001">
    <property type="entry name" value="Transcription antitermination factor NusB"/>
    <property type="match status" value="1"/>
</dbReference>
<dbReference type="Gene3D" id="1.10.940.10">
    <property type="entry name" value="NusB-like"/>
    <property type="match status" value="1"/>
</dbReference>
<dbReference type="HAMAP" id="MF_00073">
    <property type="entry name" value="NusB"/>
    <property type="match status" value="1"/>
</dbReference>
<dbReference type="InterPro" id="IPR035926">
    <property type="entry name" value="NusB-like_sf"/>
</dbReference>
<dbReference type="InterPro" id="IPR011605">
    <property type="entry name" value="NusB_fam"/>
</dbReference>
<dbReference type="InterPro" id="IPR006027">
    <property type="entry name" value="NusB_RsmB_TIM44"/>
</dbReference>
<dbReference type="NCBIfam" id="TIGR01951">
    <property type="entry name" value="nusB"/>
    <property type="match status" value="1"/>
</dbReference>
<dbReference type="PANTHER" id="PTHR11078:SF3">
    <property type="entry name" value="ANTITERMINATION NUSB DOMAIN-CONTAINING PROTEIN"/>
    <property type="match status" value="1"/>
</dbReference>
<dbReference type="PANTHER" id="PTHR11078">
    <property type="entry name" value="N UTILIZATION SUBSTANCE PROTEIN B-RELATED"/>
    <property type="match status" value="1"/>
</dbReference>
<dbReference type="Pfam" id="PF01029">
    <property type="entry name" value="NusB"/>
    <property type="match status" value="1"/>
</dbReference>
<dbReference type="SUPFAM" id="SSF48013">
    <property type="entry name" value="NusB-like"/>
    <property type="match status" value="1"/>
</dbReference>
<feature type="chain" id="PRO_1000192454" description="Transcription antitermination protein NusB">
    <location>
        <begin position="1"/>
        <end position="139"/>
    </location>
</feature>
<sequence length="139" mass="15689">MKPAARRRARECAVQALYSWQLSQNDIADVEYQFLAEQDVKDVDVLYFRELLSGVATNSAYLDGLMKPYLSRLLEELGQVEKAVLRIALFELSKRSDVPYKVAINEAIELAKTFGAEDSHKFVNGVLDKAAPVIRPNKK</sequence>
<accession>C0Q7U3</accession>
<reference key="1">
    <citation type="journal article" date="2009" name="PLoS ONE">
        <title>Salmonella paratyphi C: genetic divergence from Salmonella choleraesuis and pathogenic convergence with Salmonella typhi.</title>
        <authorList>
            <person name="Liu W.-Q."/>
            <person name="Feng Y."/>
            <person name="Wang Y."/>
            <person name="Zou Q.-H."/>
            <person name="Chen F."/>
            <person name="Guo J.-T."/>
            <person name="Peng Y.-H."/>
            <person name="Jin Y."/>
            <person name="Li Y.-G."/>
            <person name="Hu S.-N."/>
            <person name="Johnston R.N."/>
            <person name="Liu G.-R."/>
            <person name="Liu S.-L."/>
        </authorList>
    </citation>
    <scope>NUCLEOTIDE SEQUENCE [LARGE SCALE GENOMIC DNA]</scope>
    <source>
        <strain>RKS4594</strain>
    </source>
</reference>
<comment type="function">
    <text evidence="1">Involved in transcription antitermination. Required for transcription of ribosomal RNA (rRNA) genes. Binds specifically to the boxA antiterminator sequence of the ribosomal RNA (rrn) operons.</text>
</comment>
<comment type="similarity">
    <text evidence="1">Belongs to the NusB family.</text>
</comment>
<evidence type="ECO:0000255" key="1">
    <source>
        <dbReference type="HAMAP-Rule" id="MF_00073"/>
    </source>
</evidence>
<gene>
    <name evidence="1" type="primary">nusB</name>
    <name type="ordered locus">SPC_0430</name>
</gene>
<protein>
    <recommendedName>
        <fullName evidence="1">Transcription antitermination protein NusB</fullName>
    </recommendedName>
    <alternativeName>
        <fullName evidence="1">Antitermination factor NusB</fullName>
    </alternativeName>
</protein>
<organism>
    <name type="scientific">Salmonella paratyphi C (strain RKS4594)</name>
    <dbReference type="NCBI Taxonomy" id="476213"/>
    <lineage>
        <taxon>Bacteria</taxon>
        <taxon>Pseudomonadati</taxon>
        <taxon>Pseudomonadota</taxon>
        <taxon>Gammaproteobacteria</taxon>
        <taxon>Enterobacterales</taxon>
        <taxon>Enterobacteriaceae</taxon>
        <taxon>Salmonella</taxon>
    </lineage>
</organism>
<proteinExistence type="inferred from homology"/>
<name>NUSB_SALPC</name>
<keyword id="KW-0694">RNA-binding</keyword>
<keyword id="KW-0804">Transcription</keyword>
<keyword id="KW-0889">Transcription antitermination</keyword>
<keyword id="KW-0805">Transcription regulation</keyword>